<comment type="function">
    <text evidence="3">Enzyme of the diterpenoid metabolism involved in the biosynthesis of antibacterial oryzalides such as phytocassane.</text>
</comment>
<comment type="catalytic activity">
    <reaction evidence="3">
        <text>ent-isokaurene + 2 reduced [NADPH--hemoprotein reductase] + 2 O2 = ent-isokaurene-2beta,3beta-diol + 2 oxidized [NADPH--hemoprotein reductase] + 2 H2O + 2 H(+)</text>
        <dbReference type="Rhea" id="RHEA:56336"/>
        <dbReference type="Rhea" id="RHEA-COMP:11964"/>
        <dbReference type="Rhea" id="RHEA-COMP:11965"/>
        <dbReference type="ChEBI" id="CHEBI:15377"/>
        <dbReference type="ChEBI" id="CHEBI:15378"/>
        <dbReference type="ChEBI" id="CHEBI:15379"/>
        <dbReference type="ChEBI" id="CHEBI:50783"/>
        <dbReference type="ChEBI" id="CHEBI:57618"/>
        <dbReference type="ChEBI" id="CHEBI:58210"/>
        <dbReference type="ChEBI" id="CHEBI:140275"/>
        <dbReference type="EC" id="1.14.14.76"/>
    </reaction>
</comment>
<comment type="cofactor">
    <cofactor evidence="1">
        <name>heme</name>
        <dbReference type="ChEBI" id="CHEBI:30413"/>
    </cofactor>
</comment>
<comment type="biophysicochemical properties">
    <kinetics>
        <KM evidence="3">12 uM for ent-isokaurene</KM>
        <text evidence="3">kcat is 0.01 sec(-1) with ent-isokaurene as substrate.</text>
    </kinetics>
</comment>
<comment type="subcellular location">
    <subcellularLocation>
        <location evidence="4">Membrane</location>
        <topology evidence="4">Single-pass membrane protein</topology>
    </subcellularLocation>
</comment>
<comment type="similarity">
    <text evidence="4">Belongs to the cytochrome P450 family.</text>
</comment>
<comment type="sequence caution" evidence="4">
    <conflict type="erroneous initiation">
        <sequence resource="EMBL-CDS" id="BAD17674"/>
    </conflict>
    <text>Truncated N-terminus.</text>
</comment>
<comment type="sequence caution" evidence="4">
    <conflict type="erroneous initiation">
        <sequence resource="EMBL-CDS" id="BAF09101"/>
    </conflict>
    <text>Truncated N-terminus.</text>
</comment>
<comment type="online information" name="Cytochrome P450 Homepage">
    <link uri="https://drnelson.uthsc.edu/"/>
</comment>
<name>C71Z6_ORYSJ</name>
<feature type="chain" id="PRO_0000418864" description="Ent-isokaurene C2/C3-hydroxylase">
    <location>
        <begin position="1"/>
        <end position="515"/>
    </location>
</feature>
<feature type="transmembrane region" description="Helical" evidence="2">
    <location>
        <begin position="5"/>
        <end position="25"/>
    </location>
</feature>
<feature type="binding site" description="axial binding residue" evidence="1">
    <location>
        <position position="452"/>
    </location>
    <ligand>
        <name>heme</name>
        <dbReference type="ChEBI" id="CHEBI:30413"/>
    </ligand>
    <ligandPart>
        <name>Fe</name>
        <dbReference type="ChEBI" id="CHEBI:18248"/>
    </ligandPart>
</feature>
<dbReference type="EC" id="1.14.14.76" evidence="3"/>
<dbReference type="EMBL" id="AP005835">
    <property type="protein sequence ID" value="BAD17674.1"/>
    <property type="status" value="ALT_INIT"/>
    <property type="molecule type" value="Genomic_DNA"/>
</dbReference>
<dbReference type="EMBL" id="AP008208">
    <property type="protein sequence ID" value="BAF09101.1"/>
    <property type="status" value="ALT_INIT"/>
    <property type="molecule type" value="Genomic_DNA"/>
</dbReference>
<dbReference type="EMBL" id="AP014958">
    <property type="status" value="NOT_ANNOTATED_CDS"/>
    <property type="molecule type" value="Genomic_DNA"/>
</dbReference>
<dbReference type="EMBL" id="CM000139">
    <property type="protein sequence ID" value="EAZ23510.1"/>
    <property type="molecule type" value="Genomic_DNA"/>
</dbReference>
<dbReference type="EMBL" id="AK107418">
    <property type="status" value="NOT_ANNOTATED_CDS"/>
    <property type="molecule type" value="mRNA"/>
</dbReference>
<dbReference type="RefSeq" id="XP_015623817.1">
    <property type="nucleotide sequence ID" value="XM_015768331.1"/>
</dbReference>
<dbReference type="SMR" id="A3A871"/>
<dbReference type="FunCoup" id="A3A871">
    <property type="interactions" value="391"/>
</dbReference>
<dbReference type="STRING" id="39947.A3A871"/>
<dbReference type="PaxDb" id="39947-A3A871"/>
<dbReference type="KEGG" id="dosa:Os02g0570500"/>
<dbReference type="eggNOG" id="KOG0156">
    <property type="taxonomic scope" value="Eukaryota"/>
</dbReference>
<dbReference type="HOGENOM" id="CLU_001570_4_1_1"/>
<dbReference type="InParanoid" id="A3A871"/>
<dbReference type="OrthoDB" id="548633at2759"/>
<dbReference type="BioCyc" id="MetaCyc:MONOMER-18621"/>
<dbReference type="BRENDA" id="1.14.14.76">
    <property type="organism ID" value="8948"/>
</dbReference>
<dbReference type="PlantReactome" id="R-OSA-9610720">
    <property type="pathway name" value="Oryzalide A biosynthesis"/>
</dbReference>
<dbReference type="Proteomes" id="UP000000763">
    <property type="component" value="Chromosome 2"/>
</dbReference>
<dbReference type="Proteomes" id="UP000007752">
    <property type="component" value="Chromosome 2"/>
</dbReference>
<dbReference type="Proteomes" id="UP000059680">
    <property type="component" value="Chromosome 2"/>
</dbReference>
<dbReference type="GO" id="GO:0016020">
    <property type="term" value="C:membrane"/>
    <property type="evidence" value="ECO:0007669"/>
    <property type="project" value="UniProtKB-SubCell"/>
</dbReference>
<dbReference type="GO" id="GO:0036201">
    <property type="term" value="F:ent-isokaurene C2-hydroxylase activity"/>
    <property type="evidence" value="ECO:0000314"/>
    <property type="project" value="UniProtKB"/>
</dbReference>
<dbReference type="GO" id="GO:0020037">
    <property type="term" value="F:heme binding"/>
    <property type="evidence" value="ECO:0007669"/>
    <property type="project" value="InterPro"/>
</dbReference>
<dbReference type="GO" id="GO:0005506">
    <property type="term" value="F:iron ion binding"/>
    <property type="evidence" value="ECO:0007669"/>
    <property type="project" value="InterPro"/>
</dbReference>
<dbReference type="GO" id="GO:0016491">
    <property type="term" value="F:oxidoreductase activity"/>
    <property type="evidence" value="ECO:0000314"/>
    <property type="project" value="UniProtKB"/>
</dbReference>
<dbReference type="GO" id="GO:0016102">
    <property type="term" value="P:diterpenoid biosynthetic process"/>
    <property type="evidence" value="ECO:0000314"/>
    <property type="project" value="UniProtKB"/>
</dbReference>
<dbReference type="CDD" id="cd11072">
    <property type="entry name" value="CYP71-like"/>
    <property type="match status" value="1"/>
</dbReference>
<dbReference type="FunFam" id="1.10.630.10:FF:000008">
    <property type="entry name" value="Cytochrome P450 71D8"/>
    <property type="match status" value="1"/>
</dbReference>
<dbReference type="Gene3D" id="1.10.630.10">
    <property type="entry name" value="Cytochrome P450"/>
    <property type="match status" value="1"/>
</dbReference>
<dbReference type="InterPro" id="IPR001128">
    <property type="entry name" value="Cyt_P450"/>
</dbReference>
<dbReference type="InterPro" id="IPR017972">
    <property type="entry name" value="Cyt_P450_CS"/>
</dbReference>
<dbReference type="InterPro" id="IPR002401">
    <property type="entry name" value="Cyt_P450_E_grp-I"/>
</dbReference>
<dbReference type="InterPro" id="IPR036396">
    <property type="entry name" value="Cyt_P450_sf"/>
</dbReference>
<dbReference type="PANTHER" id="PTHR47955:SF19">
    <property type="entry name" value="CYTOCHROME P450 71A9-LIKE ISOFORM X1"/>
    <property type="match status" value="1"/>
</dbReference>
<dbReference type="PANTHER" id="PTHR47955">
    <property type="entry name" value="CYTOCHROME P450 FAMILY 71 PROTEIN"/>
    <property type="match status" value="1"/>
</dbReference>
<dbReference type="Pfam" id="PF00067">
    <property type="entry name" value="p450"/>
    <property type="match status" value="1"/>
</dbReference>
<dbReference type="PRINTS" id="PR00463">
    <property type="entry name" value="EP450I"/>
</dbReference>
<dbReference type="PRINTS" id="PR00385">
    <property type="entry name" value="P450"/>
</dbReference>
<dbReference type="SUPFAM" id="SSF48264">
    <property type="entry name" value="Cytochrome P450"/>
    <property type="match status" value="1"/>
</dbReference>
<dbReference type="PROSITE" id="PS00086">
    <property type="entry name" value="CYTOCHROME_P450"/>
    <property type="match status" value="1"/>
</dbReference>
<sequence length="515" mass="57157">MEDKLILDLCLSALFVVVLSKLVSSAMKPRLNLPPGPWTLPLIGSLHHLVMTKSPQTHRSLRALSEKHGPIMQLWMGEVPAVVVSSPAVAEEVLKHQDLRFADRHLTATTEEVFFGGRDVIFGPYSERWRHLRKICMQELLTAARVRSFQGVREREVARLVRELAADAGAGGDAGVNLNERISKLANDIVMVSSVGGRCSHRDEFLDALEVAKKQITWLSVADLFPSSKLARMVAVAPRKGLASRKRMELVIRRIIQERKDQLMDDSAAGAGEAAAGKDCFLDVLLRLQKEGGTPVPVTDEIIVVLLFDMISGASETSPTVLIWTLAELMRNPRIMAKAQAEVRQAVAGKTTITEDDIVGLSYLKMVIKETLRLHPPAPLLNPRKCRETSQVMGYDIPKGTSVFVNMWAICRDSRYWEDPEEYKPERFENNSVDYKGNNFEFLPFGSGRRICPGINLGVANLELPLASLLYHFDWKLPNGMAPKDLDMHETSGMVAAKLITLNICPITHIAPSSA</sequence>
<keyword id="KW-0349">Heme</keyword>
<keyword id="KW-0408">Iron</keyword>
<keyword id="KW-0472">Membrane</keyword>
<keyword id="KW-0479">Metal-binding</keyword>
<keyword id="KW-0503">Monooxygenase</keyword>
<keyword id="KW-0521">NADP</keyword>
<keyword id="KW-0560">Oxidoreductase</keyword>
<keyword id="KW-1185">Reference proteome</keyword>
<keyword id="KW-0812">Transmembrane</keyword>
<keyword id="KW-1133">Transmembrane helix</keyword>
<protein>
    <recommendedName>
        <fullName>Ent-isokaurene C2/C3-hydroxylase</fullName>
        <ecNumber evidence="3">1.14.14.76</ecNumber>
    </recommendedName>
    <alternativeName>
        <fullName>Cytochrome P450 71Z6</fullName>
    </alternativeName>
</protein>
<evidence type="ECO:0000250" key="1"/>
<evidence type="ECO:0000255" key="2"/>
<evidence type="ECO:0000269" key="3">
    <source>
    </source>
</evidence>
<evidence type="ECO:0000305" key="4"/>
<gene>
    <name type="primary">CYP71Z6</name>
    <name type="ordered locus">Os02g0570500</name>
    <name type="ordered locus">LOC_Os02g36150</name>
    <name type="ORF">OsJ_07206</name>
    <name type="ORF">OSJNBa0008E01.28</name>
</gene>
<proteinExistence type="evidence at protein level"/>
<accession>A3A871</accession>
<accession>Q6YV92</accession>
<reference key="1">
    <citation type="journal article" date="2005" name="Nature">
        <title>The map-based sequence of the rice genome.</title>
        <authorList>
            <consortium name="International rice genome sequencing project (IRGSP)"/>
        </authorList>
    </citation>
    <scope>NUCLEOTIDE SEQUENCE [LARGE SCALE GENOMIC DNA]</scope>
    <source>
        <strain>cv. Nipponbare</strain>
    </source>
</reference>
<reference key="2">
    <citation type="journal article" date="2008" name="Nucleic Acids Res.">
        <title>The rice annotation project database (RAP-DB): 2008 update.</title>
        <authorList>
            <consortium name="The rice annotation project (RAP)"/>
        </authorList>
    </citation>
    <scope>GENOME REANNOTATION</scope>
    <source>
        <strain>cv. Nipponbare</strain>
    </source>
</reference>
<reference key="3">
    <citation type="journal article" date="2013" name="Rice">
        <title>Improvement of the Oryza sativa Nipponbare reference genome using next generation sequence and optical map data.</title>
        <authorList>
            <person name="Kawahara Y."/>
            <person name="de la Bastide M."/>
            <person name="Hamilton J.P."/>
            <person name="Kanamori H."/>
            <person name="McCombie W.R."/>
            <person name="Ouyang S."/>
            <person name="Schwartz D.C."/>
            <person name="Tanaka T."/>
            <person name="Wu J."/>
            <person name="Zhou S."/>
            <person name="Childs K.L."/>
            <person name="Davidson R.M."/>
            <person name="Lin H."/>
            <person name="Quesada-Ocampo L."/>
            <person name="Vaillancourt B."/>
            <person name="Sakai H."/>
            <person name="Lee S.S."/>
            <person name="Kim J."/>
            <person name="Numa H."/>
            <person name="Itoh T."/>
            <person name="Buell C.R."/>
            <person name="Matsumoto T."/>
        </authorList>
    </citation>
    <scope>GENOME REANNOTATION</scope>
    <source>
        <strain>cv. Nipponbare</strain>
    </source>
</reference>
<reference key="4">
    <citation type="journal article" date="2005" name="PLoS Biol.">
        <title>The genomes of Oryza sativa: a history of duplications.</title>
        <authorList>
            <person name="Yu J."/>
            <person name="Wang J."/>
            <person name="Lin W."/>
            <person name="Li S."/>
            <person name="Li H."/>
            <person name="Zhou J."/>
            <person name="Ni P."/>
            <person name="Dong W."/>
            <person name="Hu S."/>
            <person name="Zeng C."/>
            <person name="Zhang J."/>
            <person name="Zhang Y."/>
            <person name="Li R."/>
            <person name="Xu Z."/>
            <person name="Li S."/>
            <person name="Li X."/>
            <person name="Zheng H."/>
            <person name="Cong L."/>
            <person name="Lin L."/>
            <person name="Yin J."/>
            <person name="Geng J."/>
            <person name="Li G."/>
            <person name="Shi J."/>
            <person name="Liu J."/>
            <person name="Lv H."/>
            <person name="Li J."/>
            <person name="Wang J."/>
            <person name="Deng Y."/>
            <person name="Ran L."/>
            <person name="Shi X."/>
            <person name="Wang X."/>
            <person name="Wu Q."/>
            <person name="Li C."/>
            <person name="Ren X."/>
            <person name="Wang J."/>
            <person name="Wang X."/>
            <person name="Li D."/>
            <person name="Liu D."/>
            <person name="Zhang X."/>
            <person name="Ji Z."/>
            <person name="Zhao W."/>
            <person name="Sun Y."/>
            <person name="Zhang Z."/>
            <person name="Bao J."/>
            <person name="Han Y."/>
            <person name="Dong L."/>
            <person name="Ji J."/>
            <person name="Chen P."/>
            <person name="Wu S."/>
            <person name="Liu J."/>
            <person name="Xiao Y."/>
            <person name="Bu D."/>
            <person name="Tan J."/>
            <person name="Yang L."/>
            <person name="Ye C."/>
            <person name="Zhang J."/>
            <person name="Xu J."/>
            <person name="Zhou Y."/>
            <person name="Yu Y."/>
            <person name="Zhang B."/>
            <person name="Zhuang S."/>
            <person name="Wei H."/>
            <person name="Liu B."/>
            <person name="Lei M."/>
            <person name="Yu H."/>
            <person name="Li Y."/>
            <person name="Xu H."/>
            <person name="Wei S."/>
            <person name="He X."/>
            <person name="Fang L."/>
            <person name="Zhang Z."/>
            <person name="Zhang Y."/>
            <person name="Huang X."/>
            <person name="Su Z."/>
            <person name="Tong W."/>
            <person name="Li J."/>
            <person name="Tong Z."/>
            <person name="Li S."/>
            <person name="Ye J."/>
            <person name="Wang L."/>
            <person name="Fang L."/>
            <person name="Lei T."/>
            <person name="Chen C.-S."/>
            <person name="Chen H.-C."/>
            <person name="Xu Z."/>
            <person name="Li H."/>
            <person name="Huang H."/>
            <person name="Zhang F."/>
            <person name="Xu H."/>
            <person name="Li N."/>
            <person name="Zhao C."/>
            <person name="Li S."/>
            <person name="Dong L."/>
            <person name="Huang Y."/>
            <person name="Li L."/>
            <person name="Xi Y."/>
            <person name="Qi Q."/>
            <person name="Li W."/>
            <person name="Zhang B."/>
            <person name="Hu W."/>
            <person name="Zhang Y."/>
            <person name="Tian X."/>
            <person name="Jiao Y."/>
            <person name="Liang X."/>
            <person name="Jin J."/>
            <person name="Gao L."/>
            <person name="Zheng W."/>
            <person name="Hao B."/>
            <person name="Liu S.-M."/>
            <person name="Wang W."/>
            <person name="Yuan L."/>
            <person name="Cao M."/>
            <person name="McDermott J."/>
            <person name="Samudrala R."/>
            <person name="Wang J."/>
            <person name="Wong G.K.-S."/>
            <person name="Yang H."/>
        </authorList>
    </citation>
    <scope>NUCLEOTIDE SEQUENCE [LARGE SCALE GENOMIC DNA]</scope>
    <source>
        <strain>cv. Nipponbare</strain>
    </source>
</reference>
<reference key="5">
    <citation type="journal article" date="2003" name="Science">
        <title>Collection, mapping, and annotation of over 28,000 cDNA clones from japonica rice.</title>
        <authorList>
            <consortium name="The rice full-length cDNA consortium"/>
        </authorList>
    </citation>
    <scope>NUCLEOTIDE SEQUENCE [LARGE SCALE MRNA] OF 10-515</scope>
    <source>
        <strain>cv. Nipponbare</strain>
    </source>
</reference>
<reference key="6">
    <citation type="journal article" date="2002" name="Sci. China, Ser. C, Life Sci.">
        <title>Putative cytochrome P450 genes in rice genome (Oryza sativa L. ssp. indica) and their EST evidence.</title>
        <authorList>
            <person name="Zhong L."/>
            <person name="Wang K."/>
            <person name="Tan J."/>
            <person name="Li W."/>
            <person name="Li S."/>
        </authorList>
    </citation>
    <scope>GENE FAMILY</scope>
    <scope>NOMENCLATURE</scope>
</reference>
<reference key="7">
    <citation type="journal article" date="2011" name="FEBS Lett.">
        <title>Parsing a multifunctional biosynthetic gene cluster from rice: Biochemical characterization of CYP71Z6 &amp; 7.</title>
        <authorList>
            <person name="Wu Y."/>
            <person name="Hillwig M.L."/>
            <person name="Wang Q."/>
            <person name="Peters R.J."/>
        </authorList>
    </citation>
    <scope>FUNCTION</scope>
    <scope>CATALYTIC ACTIVITY</scope>
    <scope>BIOPHYSICOCHEMICAL PROPERTIES</scope>
</reference>
<organism>
    <name type="scientific">Oryza sativa subsp. japonica</name>
    <name type="common">Rice</name>
    <dbReference type="NCBI Taxonomy" id="39947"/>
    <lineage>
        <taxon>Eukaryota</taxon>
        <taxon>Viridiplantae</taxon>
        <taxon>Streptophyta</taxon>
        <taxon>Embryophyta</taxon>
        <taxon>Tracheophyta</taxon>
        <taxon>Spermatophyta</taxon>
        <taxon>Magnoliopsida</taxon>
        <taxon>Liliopsida</taxon>
        <taxon>Poales</taxon>
        <taxon>Poaceae</taxon>
        <taxon>BOP clade</taxon>
        <taxon>Oryzoideae</taxon>
        <taxon>Oryzeae</taxon>
        <taxon>Oryzinae</taxon>
        <taxon>Oryza</taxon>
        <taxon>Oryza sativa</taxon>
    </lineage>
</organism>